<feature type="chain" id="PRO_1000002762" description="Crossover junction endodeoxyribonuclease RuvC">
    <location>
        <begin position="1"/>
        <end position="190"/>
    </location>
</feature>
<feature type="active site" evidence="1">
    <location>
        <position position="8"/>
    </location>
</feature>
<feature type="active site" evidence="1">
    <location>
        <position position="67"/>
    </location>
</feature>
<feature type="active site" evidence="1">
    <location>
        <position position="139"/>
    </location>
</feature>
<feature type="binding site" evidence="1">
    <location>
        <position position="8"/>
    </location>
    <ligand>
        <name>Mg(2+)</name>
        <dbReference type="ChEBI" id="CHEBI:18420"/>
        <label>1</label>
    </ligand>
</feature>
<feature type="binding site" evidence="1">
    <location>
        <position position="67"/>
    </location>
    <ligand>
        <name>Mg(2+)</name>
        <dbReference type="ChEBI" id="CHEBI:18420"/>
        <label>2</label>
    </ligand>
</feature>
<feature type="binding site" evidence="1">
    <location>
        <position position="139"/>
    </location>
    <ligand>
        <name>Mg(2+)</name>
        <dbReference type="ChEBI" id="CHEBI:18420"/>
        <label>1</label>
    </ligand>
</feature>
<protein>
    <recommendedName>
        <fullName evidence="1">Crossover junction endodeoxyribonuclease RuvC</fullName>
        <ecNumber evidence="1">3.1.21.10</ecNumber>
    </recommendedName>
    <alternativeName>
        <fullName evidence="1">Holliday junction nuclease RuvC</fullName>
    </alternativeName>
    <alternativeName>
        <fullName evidence="1">Holliday junction resolvase RuvC</fullName>
    </alternativeName>
</protein>
<gene>
    <name evidence="1" type="primary">ruvC</name>
    <name type="ordered locus">CGSHiGG_04385</name>
</gene>
<keyword id="KW-0963">Cytoplasm</keyword>
<keyword id="KW-0227">DNA damage</keyword>
<keyword id="KW-0233">DNA recombination</keyword>
<keyword id="KW-0234">DNA repair</keyword>
<keyword id="KW-0238">DNA-binding</keyword>
<keyword id="KW-0255">Endonuclease</keyword>
<keyword id="KW-0378">Hydrolase</keyword>
<keyword id="KW-0460">Magnesium</keyword>
<keyword id="KW-0479">Metal-binding</keyword>
<keyword id="KW-0540">Nuclease</keyword>
<organism>
    <name type="scientific">Haemophilus influenzae (strain PittGG)</name>
    <dbReference type="NCBI Taxonomy" id="374931"/>
    <lineage>
        <taxon>Bacteria</taxon>
        <taxon>Pseudomonadati</taxon>
        <taxon>Pseudomonadota</taxon>
        <taxon>Gammaproteobacteria</taxon>
        <taxon>Pasteurellales</taxon>
        <taxon>Pasteurellaceae</taxon>
        <taxon>Haemophilus</taxon>
    </lineage>
</organism>
<reference key="1">
    <citation type="journal article" date="2007" name="Genome Biol.">
        <title>Characterization and modeling of the Haemophilus influenzae core and supragenomes based on the complete genomic sequences of Rd and 12 clinical nontypeable strains.</title>
        <authorList>
            <person name="Hogg J.S."/>
            <person name="Hu F.Z."/>
            <person name="Janto B."/>
            <person name="Boissy R."/>
            <person name="Hayes J."/>
            <person name="Keefe R."/>
            <person name="Post J.C."/>
            <person name="Ehrlich G.D."/>
        </authorList>
    </citation>
    <scope>NUCLEOTIDE SEQUENCE [LARGE SCALE GENOMIC DNA]</scope>
    <source>
        <strain>PittGG</strain>
    </source>
</reference>
<proteinExistence type="inferred from homology"/>
<comment type="function">
    <text evidence="1">The RuvA-RuvB-RuvC complex processes Holliday junction (HJ) DNA during genetic recombination and DNA repair. Endonuclease that resolves HJ intermediates. Cleaves cruciform DNA by making single-stranded nicks across the HJ at symmetrical positions within the homologous arms, yielding a 5'-phosphate and a 3'-hydroxyl group; requires a central core of homology in the junction. The consensus cleavage sequence is 5'-(A/T)TT(C/G)-3'. Cleavage occurs on the 3'-side of the TT dinucleotide at the point of strand exchange. HJ branch migration catalyzed by RuvA-RuvB allows RuvC to scan DNA until it finds its consensus sequence, where it cleaves and resolves the cruciform DNA.</text>
</comment>
<comment type="catalytic activity">
    <reaction evidence="1">
        <text>Endonucleolytic cleavage at a junction such as a reciprocal single-stranded crossover between two homologous DNA duplexes (Holliday junction).</text>
        <dbReference type="EC" id="3.1.21.10"/>
    </reaction>
</comment>
<comment type="cofactor">
    <cofactor evidence="1">
        <name>Mg(2+)</name>
        <dbReference type="ChEBI" id="CHEBI:18420"/>
    </cofactor>
    <text evidence="1">Binds 2 Mg(2+) ion per subunit.</text>
</comment>
<comment type="subunit">
    <text evidence="1">Homodimer which binds Holliday junction (HJ) DNA. The HJ becomes 2-fold symmetrical on binding to RuvC with unstacked arms; it has a different conformation from HJ DNA in complex with RuvA. In the full resolvosome a probable DNA-RuvA(4)-RuvB(12)-RuvC(2) complex forms which resolves the HJ.</text>
</comment>
<comment type="subcellular location">
    <subcellularLocation>
        <location evidence="1">Cytoplasm</location>
    </subcellularLocation>
</comment>
<comment type="similarity">
    <text evidence="1">Belongs to the RuvC family.</text>
</comment>
<accession>A5UGD0</accession>
<evidence type="ECO:0000255" key="1">
    <source>
        <dbReference type="HAMAP-Rule" id="MF_00034"/>
    </source>
</evidence>
<dbReference type="EC" id="3.1.21.10" evidence="1"/>
<dbReference type="EMBL" id="CP000672">
    <property type="protein sequence ID" value="ABQ99835.1"/>
    <property type="molecule type" value="Genomic_DNA"/>
</dbReference>
<dbReference type="SMR" id="A5UGD0"/>
<dbReference type="KEGG" id="hiq:CGSHiGG_04385"/>
<dbReference type="HOGENOM" id="CLU_091257_2_1_6"/>
<dbReference type="Proteomes" id="UP000001990">
    <property type="component" value="Chromosome"/>
</dbReference>
<dbReference type="GO" id="GO:0005737">
    <property type="term" value="C:cytoplasm"/>
    <property type="evidence" value="ECO:0007669"/>
    <property type="project" value="UniProtKB-SubCell"/>
</dbReference>
<dbReference type="GO" id="GO:0048476">
    <property type="term" value="C:Holliday junction resolvase complex"/>
    <property type="evidence" value="ECO:0007669"/>
    <property type="project" value="UniProtKB-UniRule"/>
</dbReference>
<dbReference type="GO" id="GO:0008821">
    <property type="term" value="F:crossover junction DNA endonuclease activity"/>
    <property type="evidence" value="ECO:0007669"/>
    <property type="project" value="UniProtKB-UniRule"/>
</dbReference>
<dbReference type="GO" id="GO:0003677">
    <property type="term" value="F:DNA binding"/>
    <property type="evidence" value="ECO:0007669"/>
    <property type="project" value="UniProtKB-KW"/>
</dbReference>
<dbReference type="GO" id="GO:0000287">
    <property type="term" value="F:magnesium ion binding"/>
    <property type="evidence" value="ECO:0007669"/>
    <property type="project" value="UniProtKB-UniRule"/>
</dbReference>
<dbReference type="GO" id="GO:0006310">
    <property type="term" value="P:DNA recombination"/>
    <property type="evidence" value="ECO:0007669"/>
    <property type="project" value="UniProtKB-UniRule"/>
</dbReference>
<dbReference type="GO" id="GO:0006281">
    <property type="term" value="P:DNA repair"/>
    <property type="evidence" value="ECO:0007669"/>
    <property type="project" value="UniProtKB-UniRule"/>
</dbReference>
<dbReference type="CDD" id="cd16962">
    <property type="entry name" value="RuvC"/>
    <property type="match status" value="1"/>
</dbReference>
<dbReference type="FunFam" id="3.30.420.10:FF:000002">
    <property type="entry name" value="Crossover junction endodeoxyribonuclease RuvC"/>
    <property type="match status" value="1"/>
</dbReference>
<dbReference type="Gene3D" id="3.30.420.10">
    <property type="entry name" value="Ribonuclease H-like superfamily/Ribonuclease H"/>
    <property type="match status" value="1"/>
</dbReference>
<dbReference type="HAMAP" id="MF_00034">
    <property type="entry name" value="RuvC"/>
    <property type="match status" value="1"/>
</dbReference>
<dbReference type="InterPro" id="IPR012337">
    <property type="entry name" value="RNaseH-like_sf"/>
</dbReference>
<dbReference type="InterPro" id="IPR036397">
    <property type="entry name" value="RNaseH_sf"/>
</dbReference>
<dbReference type="InterPro" id="IPR020563">
    <property type="entry name" value="X-over_junc_endoDNase_Mg_BS"/>
</dbReference>
<dbReference type="InterPro" id="IPR002176">
    <property type="entry name" value="X-over_junc_endoDNase_RuvC"/>
</dbReference>
<dbReference type="NCBIfam" id="TIGR00228">
    <property type="entry name" value="ruvC"/>
    <property type="match status" value="1"/>
</dbReference>
<dbReference type="PANTHER" id="PTHR30194">
    <property type="entry name" value="CROSSOVER JUNCTION ENDODEOXYRIBONUCLEASE RUVC"/>
    <property type="match status" value="1"/>
</dbReference>
<dbReference type="PANTHER" id="PTHR30194:SF3">
    <property type="entry name" value="CROSSOVER JUNCTION ENDODEOXYRIBONUCLEASE RUVC"/>
    <property type="match status" value="1"/>
</dbReference>
<dbReference type="Pfam" id="PF02075">
    <property type="entry name" value="RuvC"/>
    <property type="match status" value="1"/>
</dbReference>
<dbReference type="PRINTS" id="PR00696">
    <property type="entry name" value="RSOLVASERUVC"/>
</dbReference>
<dbReference type="SUPFAM" id="SSF53098">
    <property type="entry name" value="Ribonuclease H-like"/>
    <property type="match status" value="1"/>
</dbReference>
<dbReference type="PROSITE" id="PS01321">
    <property type="entry name" value="RUVC"/>
    <property type="match status" value="1"/>
</dbReference>
<name>RUVC_HAEIG</name>
<sequence length="190" mass="20867">MSIILGIDPGSRVTGYGVIRQTGRHLEYLGSGAIRTQVEDLPTRLKRIYAGVTEIITQFQPDMFAIEQVFMAKNADSALKLGQARGTAIVAAVNHDLPVFEYAARLVKQTVVGIGSADKVQVQEMVTRILKLSDKPQADAADALAIAITHAHSIQHSLHIANSVKMTETQEKMTALLKTRYSRGRFRLKI</sequence>